<reference key="1">
    <citation type="journal article" date="2002" name="Nature">
        <title>Genome sequence of the plant pathogen Ralstonia solanacearum.</title>
        <authorList>
            <person name="Salanoubat M."/>
            <person name="Genin S."/>
            <person name="Artiguenave F."/>
            <person name="Gouzy J."/>
            <person name="Mangenot S."/>
            <person name="Arlat M."/>
            <person name="Billault A."/>
            <person name="Brottier P."/>
            <person name="Camus J.-C."/>
            <person name="Cattolico L."/>
            <person name="Chandler M."/>
            <person name="Choisne N."/>
            <person name="Claudel-Renard C."/>
            <person name="Cunnac S."/>
            <person name="Demange N."/>
            <person name="Gaspin C."/>
            <person name="Lavie M."/>
            <person name="Moisan A."/>
            <person name="Robert C."/>
            <person name="Saurin W."/>
            <person name="Schiex T."/>
            <person name="Siguier P."/>
            <person name="Thebault P."/>
            <person name="Whalen M."/>
            <person name="Wincker P."/>
            <person name="Levy M."/>
            <person name="Weissenbach J."/>
            <person name="Boucher C.A."/>
        </authorList>
    </citation>
    <scope>NUCLEOTIDE SEQUENCE [LARGE SCALE GENOMIC DNA]</scope>
    <source>
        <strain>ATCC BAA-1114 / GMI1000</strain>
    </source>
</reference>
<comment type="function">
    <text evidence="1">Catalyzes the synthesis of the hydroxymethylpyrimidine phosphate (HMP-P) moiety of thiamine from aminoimidazole ribotide (AIR) in a radical S-adenosyl-L-methionine (SAM)-dependent reaction.</text>
</comment>
<comment type="catalytic activity">
    <reaction evidence="1">
        <text>5-amino-1-(5-phospho-beta-D-ribosyl)imidazole + S-adenosyl-L-methionine = 4-amino-2-methyl-5-(phosphooxymethyl)pyrimidine + CO + 5'-deoxyadenosine + formate + L-methionine + 3 H(+)</text>
        <dbReference type="Rhea" id="RHEA:24840"/>
        <dbReference type="ChEBI" id="CHEBI:15378"/>
        <dbReference type="ChEBI" id="CHEBI:15740"/>
        <dbReference type="ChEBI" id="CHEBI:17245"/>
        <dbReference type="ChEBI" id="CHEBI:17319"/>
        <dbReference type="ChEBI" id="CHEBI:57844"/>
        <dbReference type="ChEBI" id="CHEBI:58354"/>
        <dbReference type="ChEBI" id="CHEBI:59789"/>
        <dbReference type="ChEBI" id="CHEBI:137981"/>
        <dbReference type="EC" id="4.1.99.17"/>
    </reaction>
</comment>
<comment type="cofactor">
    <cofactor evidence="1">
        <name>[4Fe-4S] cluster</name>
        <dbReference type="ChEBI" id="CHEBI:49883"/>
    </cofactor>
    <text evidence="1">Binds 1 [4Fe-4S] cluster per subunit. The cluster is coordinated with 3 cysteines and an exchangeable S-adenosyl-L-methionine.</text>
</comment>
<comment type="pathway">
    <text evidence="1">Cofactor biosynthesis; thiamine diphosphate biosynthesis.</text>
</comment>
<comment type="subunit">
    <text evidence="1">Homodimer.</text>
</comment>
<comment type="similarity">
    <text evidence="1">Belongs to the ThiC family.</text>
</comment>
<gene>
    <name evidence="1" type="primary">thiC</name>
    <name type="ordered locus">RSc0113</name>
    <name type="ORF">RS00983</name>
</gene>
<feature type="chain" id="PRO_0000152828" description="Phosphomethylpyrimidine synthase">
    <location>
        <begin position="1"/>
        <end position="631"/>
    </location>
</feature>
<feature type="binding site" evidence="1">
    <location>
        <position position="239"/>
    </location>
    <ligand>
        <name>substrate</name>
    </ligand>
</feature>
<feature type="binding site" evidence="1">
    <location>
        <position position="268"/>
    </location>
    <ligand>
        <name>substrate</name>
    </ligand>
</feature>
<feature type="binding site" evidence="1">
    <location>
        <position position="297"/>
    </location>
    <ligand>
        <name>substrate</name>
    </ligand>
</feature>
<feature type="binding site" evidence="1">
    <location>
        <position position="333"/>
    </location>
    <ligand>
        <name>substrate</name>
    </ligand>
</feature>
<feature type="binding site" evidence="1">
    <location>
        <begin position="353"/>
        <end position="355"/>
    </location>
    <ligand>
        <name>substrate</name>
    </ligand>
</feature>
<feature type="binding site" evidence="1">
    <location>
        <begin position="394"/>
        <end position="397"/>
    </location>
    <ligand>
        <name>substrate</name>
    </ligand>
</feature>
<feature type="binding site" evidence="1">
    <location>
        <position position="433"/>
    </location>
    <ligand>
        <name>substrate</name>
    </ligand>
</feature>
<feature type="binding site" evidence="1">
    <location>
        <position position="437"/>
    </location>
    <ligand>
        <name>Zn(2+)</name>
        <dbReference type="ChEBI" id="CHEBI:29105"/>
    </ligand>
</feature>
<feature type="binding site" evidence="1">
    <location>
        <position position="460"/>
    </location>
    <ligand>
        <name>substrate</name>
    </ligand>
</feature>
<feature type="binding site" evidence="1">
    <location>
        <position position="501"/>
    </location>
    <ligand>
        <name>Zn(2+)</name>
        <dbReference type="ChEBI" id="CHEBI:29105"/>
    </ligand>
</feature>
<feature type="binding site" evidence="1">
    <location>
        <position position="581"/>
    </location>
    <ligand>
        <name>[4Fe-4S] cluster</name>
        <dbReference type="ChEBI" id="CHEBI:49883"/>
        <note>4Fe-4S-S-AdoMet</note>
    </ligand>
</feature>
<feature type="binding site" evidence="1">
    <location>
        <position position="584"/>
    </location>
    <ligand>
        <name>[4Fe-4S] cluster</name>
        <dbReference type="ChEBI" id="CHEBI:49883"/>
        <note>4Fe-4S-S-AdoMet</note>
    </ligand>
</feature>
<feature type="binding site" evidence="1">
    <location>
        <position position="589"/>
    </location>
    <ligand>
        <name>[4Fe-4S] cluster</name>
        <dbReference type="ChEBI" id="CHEBI:49883"/>
        <note>4Fe-4S-S-AdoMet</note>
    </ligand>
</feature>
<evidence type="ECO:0000255" key="1">
    <source>
        <dbReference type="HAMAP-Rule" id="MF_00089"/>
    </source>
</evidence>
<name>THIC_RALN1</name>
<proteinExistence type="inferred from homology"/>
<organism>
    <name type="scientific">Ralstonia nicotianae (strain ATCC BAA-1114 / GMI1000)</name>
    <name type="common">Ralstonia solanacearum</name>
    <dbReference type="NCBI Taxonomy" id="267608"/>
    <lineage>
        <taxon>Bacteria</taxon>
        <taxon>Pseudomonadati</taxon>
        <taxon>Pseudomonadota</taxon>
        <taxon>Betaproteobacteria</taxon>
        <taxon>Burkholderiales</taxon>
        <taxon>Burkholderiaceae</taxon>
        <taxon>Ralstonia</taxon>
        <taxon>Ralstonia solanacearum species complex</taxon>
    </lineage>
</organism>
<protein>
    <recommendedName>
        <fullName evidence="1">Phosphomethylpyrimidine synthase</fullName>
        <ecNumber evidence="1">4.1.99.17</ecNumber>
    </recommendedName>
    <alternativeName>
        <fullName evidence="1">Hydroxymethylpyrimidine phosphate synthase</fullName>
        <shortName evidence="1">HMP-P synthase</shortName>
        <shortName evidence="1">HMP-phosphate synthase</shortName>
        <shortName evidence="1">HMPP synthase</shortName>
    </alternativeName>
    <alternativeName>
        <fullName evidence="1">Thiamine biosynthesis protein ThiC</fullName>
    </alternativeName>
</protein>
<dbReference type="EC" id="4.1.99.17" evidence="1"/>
<dbReference type="EMBL" id="AL646052">
    <property type="protein sequence ID" value="CAD13641.1"/>
    <property type="molecule type" value="Genomic_DNA"/>
</dbReference>
<dbReference type="RefSeq" id="WP_011000080.1">
    <property type="nucleotide sequence ID" value="NC_003295.1"/>
</dbReference>
<dbReference type="SMR" id="Q8Y368"/>
<dbReference type="STRING" id="267608.RSc0113"/>
<dbReference type="EnsemblBacteria" id="CAD13641">
    <property type="protein sequence ID" value="CAD13641"/>
    <property type="gene ID" value="RSc0113"/>
</dbReference>
<dbReference type="KEGG" id="rso:RSc0113"/>
<dbReference type="PATRIC" id="fig|267608.8.peg.116"/>
<dbReference type="eggNOG" id="COG0422">
    <property type="taxonomic scope" value="Bacteria"/>
</dbReference>
<dbReference type="HOGENOM" id="CLU_013181_2_1_4"/>
<dbReference type="UniPathway" id="UPA00060"/>
<dbReference type="Proteomes" id="UP000001436">
    <property type="component" value="Chromosome"/>
</dbReference>
<dbReference type="GO" id="GO:0005829">
    <property type="term" value="C:cytosol"/>
    <property type="evidence" value="ECO:0007669"/>
    <property type="project" value="TreeGrafter"/>
</dbReference>
<dbReference type="GO" id="GO:0051539">
    <property type="term" value="F:4 iron, 4 sulfur cluster binding"/>
    <property type="evidence" value="ECO:0007669"/>
    <property type="project" value="UniProtKB-KW"/>
</dbReference>
<dbReference type="GO" id="GO:0016830">
    <property type="term" value="F:carbon-carbon lyase activity"/>
    <property type="evidence" value="ECO:0007669"/>
    <property type="project" value="InterPro"/>
</dbReference>
<dbReference type="GO" id="GO:0008270">
    <property type="term" value="F:zinc ion binding"/>
    <property type="evidence" value="ECO:0007669"/>
    <property type="project" value="UniProtKB-UniRule"/>
</dbReference>
<dbReference type="GO" id="GO:0009228">
    <property type="term" value="P:thiamine biosynthetic process"/>
    <property type="evidence" value="ECO:0007669"/>
    <property type="project" value="UniProtKB-KW"/>
</dbReference>
<dbReference type="GO" id="GO:0009229">
    <property type="term" value="P:thiamine diphosphate biosynthetic process"/>
    <property type="evidence" value="ECO:0007669"/>
    <property type="project" value="UniProtKB-UniRule"/>
</dbReference>
<dbReference type="FunFam" id="3.20.20.540:FF:000001">
    <property type="entry name" value="Phosphomethylpyrimidine synthase"/>
    <property type="match status" value="1"/>
</dbReference>
<dbReference type="Gene3D" id="6.10.250.620">
    <property type="match status" value="1"/>
</dbReference>
<dbReference type="Gene3D" id="3.20.20.540">
    <property type="entry name" value="Radical SAM ThiC family, central domain"/>
    <property type="match status" value="1"/>
</dbReference>
<dbReference type="HAMAP" id="MF_00089">
    <property type="entry name" value="ThiC"/>
    <property type="match status" value="1"/>
</dbReference>
<dbReference type="InterPro" id="IPR037509">
    <property type="entry name" value="ThiC"/>
</dbReference>
<dbReference type="InterPro" id="IPR025747">
    <property type="entry name" value="ThiC-associated_dom"/>
</dbReference>
<dbReference type="InterPro" id="IPR038521">
    <property type="entry name" value="ThiC/Bza_core_dom"/>
</dbReference>
<dbReference type="InterPro" id="IPR002817">
    <property type="entry name" value="ThiC/BzaA/B"/>
</dbReference>
<dbReference type="NCBIfam" id="NF006763">
    <property type="entry name" value="PRK09284.1"/>
    <property type="match status" value="1"/>
</dbReference>
<dbReference type="NCBIfam" id="NF009895">
    <property type="entry name" value="PRK13352.1"/>
    <property type="match status" value="1"/>
</dbReference>
<dbReference type="NCBIfam" id="TIGR00190">
    <property type="entry name" value="thiC"/>
    <property type="match status" value="1"/>
</dbReference>
<dbReference type="PANTHER" id="PTHR30557:SF1">
    <property type="entry name" value="PHOSPHOMETHYLPYRIMIDINE SYNTHASE, CHLOROPLASTIC"/>
    <property type="match status" value="1"/>
</dbReference>
<dbReference type="PANTHER" id="PTHR30557">
    <property type="entry name" value="THIAMINE BIOSYNTHESIS PROTEIN THIC"/>
    <property type="match status" value="1"/>
</dbReference>
<dbReference type="Pfam" id="PF13667">
    <property type="entry name" value="ThiC-associated"/>
    <property type="match status" value="1"/>
</dbReference>
<dbReference type="Pfam" id="PF01964">
    <property type="entry name" value="ThiC_Rad_SAM"/>
    <property type="match status" value="1"/>
</dbReference>
<dbReference type="SFLD" id="SFLDF00407">
    <property type="entry name" value="phosphomethylpyrimidine_syntha"/>
    <property type="match status" value="1"/>
</dbReference>
<dbReference type="SFLD" id="SFLDG01114">
    <property type="entry name" value="phosphomethylpyrimidine_syntha"/>
    <property type="match status" value="1"/>
</dbReference>
<dbReference type="SFLD" id="SFLDS00113">
    <property type="entry name" value="Radical_SAM_Phosphomethylpyrim"/>
    <property type="match status" value="1"/>
</dbReference>
<sequence length="631" mass="70091">MPQAKNAPAASFDSLQTELDQKFAYPASSKTYIAGSRPDLRVPMRTIKQTATRTDQGEMLNPPIPVYDTSGPYSDPDVHIDLKAGLAPLRAKWIDERGDTVVLPSLSSEYGQARAHDPATAHLRFAQLTNPRRAKPGANVSQMHYARRGIITPEMEYVALRESLNLQALQDKPEYRKLLKQHPGFSYGANLPQRPEDITPEFVRQEIAAGRAIIPANINHVELEPMAIGRNFRVKINGNLGNSAVTSSLAEEVEKMVWSIRWGADTIMDLSTGKHIHETREWILRNSPVPIGTVPIYQALDKTGGVAEDLTWEMFRDTLIEQAEQGVDYFTIHAGVLLRYVPLTADRITGIVSRGGSIMAKWCLAHHKENFLYTHFDEICEIMKAYDVSFSLGDGLRPGCIADSNDAAQFGELYTLGELTKKAWEHDVQVMIEGPGHVPLQRVQANMDEELKHCFEAPFYTLGPLVTDIAPGYDHITSGIGAANIGWYGTAMLCYVTPKEHLGLPDKEDVREGIITYKIAAHAADLAKGWPGAQLRDNALSKARFEFRWEDQFNLGLDPEKARAFHDETLPAEGAKIAHFCSMCGPKFCSMKITQEVRDYAASLDANATAAEHGMEEKSIEFRKAGAKIYS</sequence>
<accession>Q8Y368</accession>
<keyword id="KW-0004">4Fe-4S</keyword>
<keyword id="KW-0408">Iron</keyword>
<keyword id="KW-0411">Iron-sulfur</keyword>
<keyword id="KW-0456">Lyase</keyword>
<keyword id="KW-0479">Metal-binding</keyword>
<keyword id="KW-1185">Reference proteome</keyword>
<keyword id="KW-0949">S-adenosyl-L-methionine</keyword>
<keyword id="KW-0784">Thiamine biosynthesis</keyword>
<keyword id="KW-0862">Zinc</keyword>